<evidence type="ECO:0000250" key="1">
    <source>
        <dbReference type="UniProtKB" id="Q9P272"/>
    </source>
</evidence>
<evidence type="ECO:0000256" key="2">
    <source>
        <dbReference type="SAM" id="MobiDB-lite"/>
    </source>
</evidence>
<evidence type="ECO:0000303" key="3">
    <source>
    </source>
</evidence>
<evidence type="ECO:0000303" key="4">
    <source ref="2"/>
</evidence>
<evidence type="ECO:0000305" key="5"/>
<evidence type="ECO:0007744" key="6">
    <source>
    </source>
</evidence>
<feature type="chain" id="PRO_0000328793" description="Probable tRNA methyltransferase 9B">
    <location>
        <begin position="1"/>
        <end position="447"/>
    </location>
</feature>
<feature type="region of interest" description="Disordered" evidence="2">
    <location>
        <begin position="274"/>
        <end position="306"/>
    </location>
</feature>
<feature type="region of interest" description="Disordered" evidence="2">
    <location>
        <begin position="320"/>
        <end position="348"/>
    </location>
</feature>
<feature type="compositionally biased region" description="Polar residues" evidence="2">
    <location>
        <begin position="276"/>
        <end position="286"/>
    </location>
</feature>
<feature type="modified residue" description="Phosphoserine" evidence="6">
    <location>
        <position position="212"/>
    </location>
</feature>
<feature type="splice variant" id="VSP_032795" description="In isoform 2." evidence="4">
    <location>
        <begin position="1"/>
        <end position="87"/>
    </location>
</feature>
<feature type="splice variant" id="VSP_032796" description="In isoform 3." evidence="3">
    <original>V</original>
    <variation>G</variation>
    <location>
        <position position="110"/>
    </location>
</feature>
<feature type="splice variant" id="VSP_032797" description="In isoform 3." evidence="3">
    <location>
        <begin position="111"/>
        <end position="447"/>
    </location>
</feature>
<feature type="sequence conflict" description="In Ref. 2; BAD90446." evidence="5" ref="2">
    <original>R</original>
    <variation>T</variation>
    <location>
        <position position="184"/>
    </location>
</feature>
<feature type="sequence conflict" description="In Ref. 2; BAD90446." evidence="5" ref="2">
    <original>A</original>
    <variation>G</variation>
    <location>
        <position position="274"/>
    </location>
</feature>
<feature type="sequence conflict" description="In Ref. 2; BAD90446." evidence="5" ref="2">
    <original>G</original>
    <variation>E</variation>
    <location>
        <position position="337"/>
    </location>
</feature>
<keyword id="KW-0025">Alternative splicing</keyword>
<keyword id="KW-0489">Methyltransferase</keyword>
<keyword id="KW-0597">Phosphoprotein</keyword>
<keyword id="KW-1185">Reference proteome</keyword>
<keyword id="KW-0949">S-adenosyl-L-methionine</keyword>
<keyword id="KW-0808">Transferase</keyword>
<keyword id="KW-0819">tRNA processing</keyword>
<organism>
    <name type="scientific">Mus musculus</name>
    <name type="common">Mouse</name>
    <dbReference type="NCBI Taxonomy" id="10090"/>
    <lineage>
        <taxon>Eukaryota</taxon>
        <taxon>Metazoa</taxon>
        <taxon>Chordata</taxon>
        <taxon>Craniata</taxon>
        <taxon>Vertebrata</taxon>
        <taxon>Euteleostomi</taxon>
        <taxon>Mammalia</taxon>
        <taxon>Eutheria</taxon>
        <taxon>Euarchontoglires</taxon>
        <taxon>Glires</taxon>
        <taxon>Rodentia</taxon>
        <taxon>Myomorpha</taxon>
        <taxon>Muroidea</taxon>
        <taxon>Muridae</taxon>
        <taxon>Murinae</taxon>
        <taxon>Mus</taxon>
        <taxon>Mus</taxon>
    </lineage>
</organism>
<proteinExistence type="evidence at protein level"/>
<name>TRM9B_MOUSE</name>
<gene>
    <name type="primary">Trmt9b</name>
    <name type="synonym">Kiaa1456</name>
    <name type="synonym">Trmt9l</name>
</gene>
<accession>Q80WQ4</accession>
<accession>Q5DTX8</accession>
<accession>Q8CA94</accession>
<accession>Q8CAM3</accession>
<dbReference type="EC" id="2.1.1.-"/>
<dbReference type="EMBL" id="AK038497">
    <property type="protein sequence ID" value="BAC30018.1"/>
    <property type="molecule type" value="mRNA"/>
</dbReference>
<dbReference type="EMBL" id="AK039253">
    <property type="protein sequence ID" value="BAC30293.1"/>
    <property type="molecule type" value="mRNA"/>
</dbReference>
<dbReference type="EMBL" id="AK141601">
    <property type="protein sequence ID" value="BAE24758.1"/>
    <property type="molecule type" value="mRNA"/>
</dbReference>
<dbReference type="EMBL" id="AK220392">
    <property type="protein sequence ID" value="BAD90446.1"/>
    <property type="status" value="ALT_INIT"/>
    <property type="molecule type" value="mRNA"/>
</dbReference>
<dbReference type="EMBL" id="BC052184">
    <property type="protein sequence ID" value="AAH52184.1"/>
    <property type="molecule type" value="mRNA"/>
</dbReference>
<dbReference type="CCDS" id="CCDS22248.1">
    <molecule id="Q80WQ4-1"/>
</dbReference>
<dbReference type="RefSeq" id="NP_001371028.1">
    <molecule id="Q80WQ4-1"/>
    <property type="nucleotide sequence ID" value="NM_001384099.1"/>
</dbReference>
<dbReference type="RefSeq" id="NP_001371032.1">
    <molecule id="Q80WQ4-1"/>
    <property type="nucleotide sequence ID" value="NM_001384103.1"/>
</dbReference>
<dbReference type="RefSeq" id="NP_795926.2">
    <molecule id="Q80WQ4-1"/>
    <property type="nucleotide sequence ID" value="NM_176952.4"/>
</dbReference>
<dbReference type="RefSeq" id="XP_006509196.1">
    <property type="nucleotide sequence ID" value="XM_006509133.2"/>
</dbReference>
<dbReference type="RefSeq" id="XP_006509198.1">
    <property type="nucleotide sequence ID" value="XM_006509135.2"/>
</dbReference>
<dbReference type="RefSeq" id="XP_006509199.1">
    <molecule id="Q80WQ4-1"/>
    <property type="nucleotide sequence ID" value="XM_006509136.5"/>
</dbReference>
<dbReference type="SMR" id="Q80WQ4"/>
<dbReference type="FunCoup" id="Q80WQ4">
    <property type="interactions" value="1251"/>
</dbReference>
<dbReference type="STRING" id="10090.ENSMUSP00000119912"/>
<dbReference type="iPTMnet" id="Q80WQ4"/>
<dbReference type="PhosphoSitePlus" id="Q80WQ4"/>
<dbReference type="PaxDb" id="10090-ENSMUSP00000119912"/>
<dbReference type="PeptideAtlas" id="Q80WQ4"/>
<dbReference type="ProteomicsDB" id="298231">
    <molecule id="Q80WQ4-1"/>
</dbReference>
<dbReference type="ProteomicsDB" id="298232">
    <molecule id="Q80WQ4-2"/>
</dbReference>
<dbReference type="ProteomicsDB" id="298233">
    <molecule id="Q80WQ4-3"/>
</dbReference>
<dbReference type="Antibodypedia" id="58596">
    <property type="antibodies" value="56 antibodies from 16 providers"/>
</dbReference>
<dbReference type="DNASU" id="319582"/>
<dbReference type="Ensembl" id="ENSMUST00000147525.9">
    <molecule id="Q80WQ4-1"/>
    <property type="protein sequence ID" value="ENSMUSP00000119912.2"/>
    <property type="gene ID" value="ENSMUSG00000039620.18"/>
</dbReference>
<dbReference type="Ensembl" id="ENSMUST00000152039.9">
    <molecule id="Q80WQ4-3"/>
    <property type="protein sequence ID" value="ENSMUSP00000119288.3"/>
    <property type="gene ID" value="ENSMUSG00000039620.18"/>
</dbReference>
<dbReference type="Ensembl" id="ENSMUST00000171777.2">
    <molecule id="Q80WQ4-1"/>
    <property type="protein sequence ID" value="ENSMUSP00000127875.2"/>
    <property type="gene ID" value="ENSMUSG00000039620.18"/>
</dbReference>
<dbReference type="GeneID" id="319582"/>
<dbReference type="KEGG" id="mmu:319582"/>
<dbReference type="UCSC" id="uc009llk.1">
    <molecule id="Q80WQ4-1"/>
    <property type="organism name" value="mouse"/>
</dbReference>
<dbReference type="AGR" id="MGI:2442328"/>
<dbReference type="CTD" id="57604"/>
<dbReference type="MGI" id="MGI:2442328">
    <property type="gene designation" value="Trmt9b"/>
</dbReference>
<dbReference type="VEuPathDB" id="HostDB:ENSMUSG00000039620"/>
<dbReference type="eggNOG" id="KOG1331">
    <property type="taxonomic scope" value="Eukaryota"/>
</dbReference>
<dbReference type="GeneTree" id="ENSGT00940000160373"/>
<dbReference type="HOGENOM" id="CLU_029501_0_0_1"/>
<dbReference type="InParanoid" id="Q80WQ4"/>
<dbReference type="OMA" id="HGNWCIV"/>
<dbReference type="OrthoDB" id="271595at2759"/>
<dbReference type="PhylomeDB" id="Q80WQ4"/>
<dbReference type="TreeFam" id="TF316056"/>
<dbReference type="BioGRID-ORCS" id="319582">
    <property type="hits" value="0 hits in 76 CRISPR screens"/>
</dbReference>
<dbReference type="PRO" id="PR:Q80WQ4"/>
<dbReference type="Proteomes" id="UP000000589">
    <property type="component" value="Chromosome 8"/>
</dbReference>
<dbReference type="RNAct" id="Q80WQ4">
    <property type="molecule type" value="protein"/>
</dbReference>
<dbReference type="Bgee" id="ENSMUSG00000039620">
    <property type="expression patterns" value="Expressed in cerebellar cortex and 107 other cell types or tissues"/>
</dbReference>
<dbReference type="ExpressionAtlas" id="Q80WQ4">
    <property type="expression patterns" value="baseline and differential"/>
</dbReference>
<dbReference type="GO" id="GO:0008757">
    <property type="term" value="F:S-adenosylmethionine-dependent methyltransferase activity"/>
    <property type="evidence" value="ECO:0007669"/>
    <property type="project" value="InterPro"/>
</dbReference>
<dbReference type="GO" id="GO:0008175">
    <property type="term" value="F:tRNA methyltransferase activity"/>
    <property type="evidence" value="ECO:0007669"/>
    <property type="project" value="UniProtKB-ARBA"/>
</dbReference>
<dbReference type="GO" id="GO:0032259">
    <property type="term" value="P:methylation"/>
    <property type="evidence" value="ECO:0007669"/>
    <property type="project" value="UniProtKB-KW"/>
</dbReference>
<dbReference type="GO" id="GO:0006400">
    <property type="term" value="P:tRNA modification"/>
    <property type="evidence" value="ECO:0007669"/>
    <property type="project" value="UniProtKB-ARBA"/>
</dbReference>
<dbReference type="CDD" id="cd02440">
    <property type="entry name" value="AdoMet_MTases"/>
    <property type="match status" value="1"/>
</dbReference>
<dbReference type="FunFam" id="3.40.50.150:FF:000154">
    <property type="entry name" value="Probable tRNA methyltransferase 9B"/>
    <property type="match status" value="1"/>
</dbReference>
<dbReference type="Gene3D" id="3.40.50.150">
    <property type="entry name" value="Vaccinia Virus protein VP39"/>
    <property type="match status" value="2"/>
</dbReference>
<dbReference type="InterPro" id="IPR051422">
    <property type="entry name" value="AlkB_tRNA_MeTrf/Diox"/>
</dbReference>
<dbReference type="InterPro" id="IPR013216">
    <property type="entry name" value="Methyltransf_11"/>
</dbReference>
<dbReference type="InterPro" id="IPR029063">
    <property type="entry name" value="SAM-dependent_MTases_sf"/>
</dbReference>
<dbReference type="PANTHER" id="PTHR13069">
    <property type="entry name" value="ALKYLATED DNA REPAIR PROTEIN ALKB HOMOLOG 8"/>
    <property type="match status" value="1"/>
</dbReference>
<dbReference type="PANTHER" id="PTHR13069:SF36">
    <property type="entry name" value="TRNA METHYLTRANSFERASE 9B-RELATED"/>
    <property type="match status" value="1"/>
</dbReference>
<dbReference type="Pfam" id="PF08241">
    <property type="entry name" value="Methyltransf_11"/>
    <property type="match status" value="1"/>
</dbReference>
<dbReference type="SUPFAM" id="SSF53335">
    <property type="entry name" value="S-adenosyl-L-methionine-dependent methyltransferases"/>
    <property type="match status" value="1"/>
</dbReference>
<reference key="1">
    <citation type="journal article" date="2005" name="Science">
        <title>The transcriptional landscape of the mammalian genome.</title>
        <authorList>
            <person name="Carninci P."/>
            <person name="Kasukawa T."/>
            <person name="Katayama S."/>
            <person name="Gough J."/>
            <person name="Frith M.C."/>
            <person name="Maeda N."/>
            <person name="Oyama R."/>
            <person name="Ravasi T."/>
            <person name="Lenhard B."/>
            <person name="Wells C."/>
            <person name="Kodzius R."/>
            <person name="Shimokawa K."/>
            <person name="Bajic V.B."/>
            <person name="Brenner S.E."/>
            <person name="Batalov S."/>
            <person name="Forrest A.R."/>
            <person name="Zavolan M."/>
            <person name="Davis M.J."/>
            <person name="Wilming L.G."/>
            <person name="Aidinis V."/>
            <person name="Allen J.E."/>
            <person name="Ambesi-Impiombato A."/>
            <person name="Apweiler R."/>
            <person name="Aturaliya R.N."/>
            <person name="Bailey T.L."/>
            <person name="Bansal M."/>
            <person name="Baxter L."/>
            <person name="Beisel K.W."/>
            <person name="Bersano T."/>
            <person name="Bono H."/>
            <person name="Chalk A.M."/>
            <person name="Chiu K.P."/>
            <person name="Choudhary V."/>
            <person name="Christoffels A."/>
            <person name="Clutterbuck D.R."/>
            <person name="Crowe M.L."/>
            <person name="Dalla E."/>
            <person name="Dalrymple B.P."/>
            <person name="de Bono B."/>
            <person name="Della Gatta G."/>
            <person name="di Bernardo D."/>
            <person name="Down T."/>
            <person name="Engstrom P."/>
            <person name="Fagiolini M."/>
            <person name="Faulkner G."/>
            <person name="Fletcher C.F."/>
            <person name="Fukushima T."/>
            <person name="Furuno M."/>
            <person name="Futaki S."/>
            <person name="Gariboldi M."/>
            <person name="Georgii-Hemming P."/>
            <person name="Gingeras T.R."/>
            <person name="Gojobori T."/>
            <person name="Green R.E."/>
            <person name="Gustincich S."/>
            <person name="Harbers M."/>
            <person name="Hayashi Y."/>
            <person name="Hensch T.K."/>
            <person name="Hirokawa N."/>
            <person name="Hill D."/>
            <person name="Huminiecki L."/>
            <person name="Iacono M."/>
            <person name="Ikeo K."/>
            <person name="Iwama A."/>
            <person name="Ishikawa T."/>
            <person name="Jakt M."/>
            <person name="Kanapin A."/>
            <person name="Katoh M."/>
            <person name="Kawasawa Y."/>
            <person name="Kelso J."/>
            <person name="Kitamura H."/>
            <person name="Kitano H."/>
            <person name="Kollias G."/>
            <person name="Krishnan S.P."/>
            <person name="Kruger A."/>
            <person name="Kummerfeld S.K."/>
            <person name="Kurochkin I.V."/>
            <person name="Lareau L.F."/>
            <person name="Lazarevic D."/>
            <person name="Lipovich L."/>
            <person name="Liu J."/>
            <person name="Liuni S."/>
            <person name="McWilliam S."/>
            <person name="Madan Babu M."/>
            <person name="Madera M."/>
            <person name="Marchionni L."/>
            <person name="Matsuda H."/>
            <person name="Matsuzawa S."/>
            <person name="Miki H."/>
            <person name="Mignone F."/>
            <person name="Miyake S."/>
            <person name="Morris K."/>
            <person name="Mottagui-Tabar S."/>
            <person name="Mulder N."/>
            <person name="Nakano N."/>
            <person name="Nakauchi H."/>
            <person name="Ng P."/>
            <person name="Nilsson R."/>
            <person name="Nishiguchi S."/>
            <person name="Nishikawa S."/>
            <person name="Nori F."/>
            <person name="Ohara O."/>
            <person name="Okazaki Y."/>
            <person name="Orlando V."/>
            <person name="Pang K.C."/>
            <person name="Pavan W.J."/>
            <person name="Pavesi G."/>
            <person name="Pesole G."/>
            <person name="Petrovsky N."/>
            <person name="Piazza S."/>
            <person name="Reed J."/>
            <person name="Reid J.F."/>
            <person name="Ring B.Z."/>
            <person name="Ringwald M."/>
            <person name="Rost B."/>
            <person name="Ruan Y."/>
            <person name="Salzberg S.L."/>
            <person name="Sandelin A."/>
            <person name="Schneider C."/>
            <person name="Schoenbach C."/>
            <person name="Sekiguchi K."/>
            <person name="Semple C.A."/>
            <person name="Seno S."/>
            <person name="Sessa L."/>
            <person name="Sheng Y."/>
            <person name="Shibata Y."/>
            <person name="Shimada H."/>
            <person name="Shimada K."/>
            <person name="Silva D."/>
            <person name="Sinclair B."/>
            <person name="Sperling S."/>
            <person name="Stupka E."/>
            <person name="Sugiura K."/>
            <person name="Sultana R."/>
            <person name="Takenaka Y."/>
            <person name="Taki K."/>
            <person name="Tammoja K."/>
            <person name="Tan S.L."/>
            <person name="Tang S."/>
            <person name="Taylor M.S."/>
            <person name="Tegner J."/>
            <person name="Teichmann S.A."/>
            <person name="Ueda H.R."/>
            <person name="van Nimwegen E."/>
            <person name="Verardo R."/>
            <person name="Wei C.L."/>
            <person name="Yagi K."/>
            <person name="Yamanishi H."/>
            <person name="Zabarovsky E."/>
            <person name="Zhu S."/>
            <person name="Zimmer A."/>
            <person name="Hide W."/>
            <person name="Bult C."/>
            <person name="Grimmond S.M."/>
            <person name="Teasdale R.D."/>
            <person name="Liu E.T."/>
            <person name="Brusic V."/>
            <person name="Quackenbush J."/>
            <person name="Wahlestedt C."/>
            <person name="Mattick J.S."/>
            <person name="Hume D.A."/>
            <person name="Kai C."/>
            <person name="Sasaki D."/>
            <person name="Tomaru Y."/>
            <person name="Fukuda S."/>
            <person name="Kanamori-Katayama M."/>
            <person name="Suzuki M."/>
            <person name="Aoki J."/>
            <person name="Arakawa T."/>
            <person name="Iida J."/>
            <person name="Imamura K."/>
            <person name="Itoh M."/>
            <person name="Kato T."/>
            <person name="Kawaji H."/>
            <person name="Kawagashira N."/>
            <person name="Kawashima T."/>
            <person name="Kojima M."/>
            <person name="Kondo S."/>
            <person name="Konno H."/>
            <person name="Nakano K."/>
            <person name="Ninomiya N."/>
            <person name="Nishio T."/>
            <person name="Okada M."/>
            <person name="Plessy C."/>
            <person name="Shibata K."/>
            <person name="Shiraki T."/>
            <person name="Suzuki S."/>
            <person name="Tagami M."/>
            <person name="Waki K."/>
            <person name="Watahiki A."/>
            <person name="Okamura-Oho Y."/>
            <person name="Suzuki H."/>
            <person name="Kawai J."/>
            <person name="Hayashizaki Y."/>
        </authorList>
    </citation>
    <scope>NUCLEOTIDE SEQUENCE [LARGE SCALE MRNA] (ISOFORMS 1 AND 3)</scope>
    <source>
        <strain>C57BL/6J</strain>
        <tissue>Hippocampus</tissue>
        <tissue>Hypothalamus</tissue>
        <tissue>Spinal cord</tissue>
    </source>
</reference>
<reference key="2">
    <citation type="submission" date="2005-02" db="EMBL/GenBank/DDBJ databases">
        <title>Prediction of the coding sequences of mouse homologues of KIAA gene. The complete nucleotide sequences of mouse KIAA-homologous cDNAs identified by screening of terminal sequences of cDNA clones randomly sampled from size-fractionated libraries.</title>
        <authorList>
            <person name="Okazaki N."/>
            <person name="Kikuno R.F."/>
            <person name="Ohara R."/>
            <person name="Inamoto S."/>
            <person name="Nagase T."/>
            <person name="Ohara O."/>
            <person name="Koga H."/>
        </authorList>
    </citation>
    <scope>NUCLEOTIDE SEQUENCE [LARGE SCALE MRNA] (ISOFORM 2)</scope>
    <source>
        <tissue>Brain</tissue>
    </source>
</reference>
<reference key="3">
    <citation type="journal article" date="2004" name="Genome Res.">
        <title>The status, quality, and expansion of the NIH full-length cDNA project: the Mammalian Gene Collection (MGC).</title>
        <authorList>
            <consortium name="The MGC Project Team"/>
        </authorList>
    </citation>
    <scope>NUCLEOTIDE SEQUENCE [LARGE SCALE MRNA] (ISOFORM 1)</scope>
    <source>
        <tissue>Embryo</tissue>
    </source>
</reference>
<reference key="4">
    <citation type="journal article" date="2010" name="Cell">
        <title>A tissue-specific atlas of mouse protein phosphorylation and expression.</title>
        <authorList>
            <person name="Huttlin E.L."/>
            <person name="Jedrychowski M.P."/>
            <person name="Elias J.E."/>
            <person name="Goswami T."/>
            <person name="Rad R."/>
            <person name="Beausoleil S.A."/>
            <person name="Villen J."/>
            <person name="Haas W."/>
            <person name="Sowa M.E."/>
            <person name="Gygi S.P."/>
        </authorList>
    </citation>
    <scope>PHOSPHORYLATION [LARGE SCALE ANALYSIS] AT SER-212</scope>
    <scope>IDENTIFICATION BY MASS SPECTROMETRY [LARGE SCALE ANALYSIS]</scope>
    <source>
        <tissue>Brain</tissue>
    </source>
</reference>
<protein>
    <recommendedName>
        <fullName>Probable tRNA methyltransferase 9B</fullName>
    </recommendedName>
    <alternativeName>
        <fullName>Probable tRNA methyltransferase 9-like protein</fullName>
        <ecNumber>2.1.1.-</ecNumber>
    </alternativeName>
</protein>
<sequence>MDPEAVELEKRHVHSVYENTAPYFTDLQSKAWPRVRQFLQDQKPGSLVADIGCGTGKYLKVNSQVHTLGCDYCGPLVEIARNRGCEVMVCDNLNLPFRDQGFDAIISIGVIHHFSTKERRIRAIKEMARVLAPGGQLMIYVWAMEQKNRRFEKQDVLVPWNRALCSRLLSESHQSWGHHCEHPRSRGFQGPGSVCGCAVCFKGRCDSKRSHSMDYGSAVARTCCEAISKEGERENGLYSNFGKSFRSWFFSRSLDESTLRKQIERVRPMKIPEAWANSTVSQQPSRHPSLDLHAPEPFSTKGPNLDEVFVDTSSQRHLGWLRTPGTSDNFSGHKGGGSRRKEGGNFLDITDTGDSVAASNSSDPSARKILRRVSAFDSNDSNSEDSSFLEAQRDATDSKAFMRYYHVFREGELSSLLQESVSELQVLSSGNDHGNWCIIAEKKRSWD</sequence>
<comment type="function">
    <text evidence="1">May modify wobble uridines in specific arginine and glutamic acid tRNAs. Acts as a tumor suppressor by promoting the expression of LIN9 (By similarity).</text>
</comment>
<comment type="alternative products">
    <event type="alternative splicing"/>
    <isoform>
        <id>Q80WQ4-1</id>
        <name>1</name>
        <sequence type="displayed"/>
    </isoform>
    <isoform>
        <id>Q80WQ4-2</id>
        <name>2</name>
        <sequence type="described" ref="VSP_032795"/>
    </isoform>
    <isoform>
        <id>Q80WQ4-3</id>
        <name>3</name>
        <sequence type="described" ref="VSP_032796 VSP_032797"/>
    </isoform>
</comment>
<comment type="similarity">
    <text evidence="5">Belongs to the methyltransferase superfamily.</text>
</comment>
<comment type="sequence caution" evidence="5">
    <conflict type="erroneous initiation">
        <sequence resource="EMBL-CDS" id="BAD90446"/>
    </conflict>
</comment>